<evidence type="ECO:0000250" key="1"/>
<evidence type="ECO:0000255" key="2"/>
<evidence type="ECO:0000305" key="3"/>
<sequence>MAQPTPHAGLQEGLIHEPASEHGGGFPPFQSTTFAAQILWLAIAFGLLYYLMSRVAVPRIAGLLHDRQARLAADLDEASRMKTGADSARGAYERSLKEAQDKAKGIAQATRDSLAAEAETRRKALEADLAAKLAESEAQIRARTATAMGSVREVAADAATAIVERLIGQSPDRAAVEAAYDRTQTVH</sequence>
<proteinExistence type="inferred from homology"/>
<feature type="chain" id="PRO_0000369014" description="ATP synthase subunit b 2">
    <location>
        <begin position="1"/>
        <end position="187"/>
    </location>
</feature>
<feature type="transmembrane region" description="Helical" evidence="2">
    <location>
        <begin position="32"/>
        <end position="52"/>
    </location>
</feature>
<gene>
    <name type="primary">atpF2</name>
    <name type="synonym">atpG</name>
    <name type="ordered locus">M446_6946</name>
</gene>
<dbReference type="EMBL" id="CP000943">
    <property type="protein sequence ID" value="ACA21180.1"/>
    <property type="molecule type" value="Genomic_DNA"/>
</dbReference>
<dbReference type="RefSeq" id="WP_012336552.1">
    <property type="nucleotide sequence ID" value="NC_010511.1"/>
</dbReference>
<dbReference type="SMR" id="B0ULY3"/>
<dbReference type="STRING" id="426117.M446_6946"/>
<dbReference type="KEGG" id="met:M446_6946"/>
<dbReference type="eggNOG" id="COG0711">
    <property type="taxonomic scope" value="Bacteria"/>
</dbReference>
<dbReference type="HOGENOM" id="CLU_079215_1_2_5"/>
<dbReference type="GO" id="GO:0005886">
    <property type="term" value="C:plasma membrane"/>
    <property type="evidence" value="ECO:0007669"/>
    <property type="project" value="UniProtKB-SubCell"/>
</dbReference>
<dbReference type="GO" id="GO:0045259">
    <property type="term" value="C:proton-transporting ATP synthase complex"/>
    <property type="evidence" value="ECO:0007669"/>
    <property type="project" value="UniProtKB-KW"/>
</dbReference>
<dbReference type="GO" id="GO:0046933">
    <property type="term" value="F:proton-transporting ATP synthase activity, rotational mechanism"/>
    <property type="evidence" value="ECO:0007669"/>
    <property type="project" value="UniProtKB-UniRule"/>
</dbReference>
<dbReference type="GO" id="GO:0046961">
    <property type="term" value="F:proton-transporting ATPase activity, rotational mechanism"/>
    <property type="evidence" value="ECO:0007669"/>
    <property type="project" value="TreeGrafter"/>
</dbReference>
<dbReference type="CDD" id="cd06503">
    <property type="entry name" value="ATP-synt_Fo_b"/>
    <property type="match status" value="1"/>
</dbReference>
<dbReference type="HAMAP" id="MF_01398">
    <property type="entry name" value="ATP_synth_b_bprime"/>
    <property type="match status" value="1"/>
</dbReference>
<dbReference type="InterPro" id="IPR002146">
    <property type="entry name" value="ATP_synth_b/b'su_bac/chlpt"/>
</dbReference>
<dbReference type="InterPro" id="IPR050059">
    <property type="entry name" value="ATP_synthase_B_chain"/>
</dbReference>
<dbReference type="NCBIfam" id="NF006612">
    <property type="entry name" value="PRK09174.1"/>
    <property type="match status" value="1"/>
</dbReference>
<dbReference type="PANTHER" id="PTHR33445:SF1">
    <property type="entry name" value="ATP SYNTHASE SUBUNIT B"/>
    <property type="match status" value="1"/>
</dbReference>
<dbReference type="PANTHER" id="PTHR33445">
    <property type="entry name" value="ATP SYNTHASE SUBUNIT B', CHLOROPLASTIC"/>
    <property type="match status" value="1"/>
</dbReference>
<dbReference type="Pfam" id="PF00430">
    <property type="entry name" value="ATP-synt_B"/>
    <property type="match status" value="1"/>
</dbReference>
<keyword id="KW-0066">ATP synthesis</keyword>
<keyword id="KW-0997">Cell inner membrane</keyword>
<keyword id="KW-1003">Cell membrane</keyword>
<keyword id="KW-0138">CF(0)</keyword>
<keyword id="KW-0375">Hydrogen ion transport</keyword>
<keyword id="KW-0406">Ion transport</keyword>
<keyword id="KW-0472">Membrane</keyword>
<keyword id="KW-0812">Transmembrane</keyword>
<keyword id="KW-1133">Transmembrane helix</keyword>
<keyword id="KW-0813">Transport</keyword>
<protein>
    <recommendedName>
        <fullName>ATP synthase subunit b 2</fullName>
    </recommendedName>
    <alternativeName>
        <fullName>ATP synthase F(0) sector subunit b 2</fullName>
    </alternativeName>
    <alternativeName>
        <fullName>ATPase subunit I 2</fullName>
    </alternativeName>
    <alternativeName>
        <fullName>F-type ATPase subunit b 2</fullName>
        <shortName>F-ATPase subunit b 2</shortName>
    </alternativeName>
</protein>
<accession>B0ULY3</accession>
<organism>
    <name type="scientific">Methylobacterium sp. (strain 4-46)</name>
    <dbReference type="NCBI Taxonomy" id="426117"/>
    <lineage>
        <taxon>Bacteria</taxon>
        <taxon>Pseudomonadati</taxon>
        <taxon>Pseudomonadota</taxon>
        <taxon>Alphaproteobacteria</taxon>
        <taxon>Hyphomicrobiales</taxon>
        <taxon>Methylobacteriaceae</taxon>
        <taxon>Methylobacterium</taxon>
    </lineage>
</organism>
<comment type="function">
    <text evidence="1">F(1)F(0) ATP synthase produces ATP from ADP in the presence of a proton or sodium gradient. F-type ATPases consist of two structural domains, F(1) containing the extramembraneous catalytic core and F(0) containing the membrane proton channel, linked together by a central stalk and a peripheral stalk. During catalysis, ATP synthesis in the catalytic domain of F(1) is coupled via a rotary mechanism of the central stalk subunits to proton translocation (By similarity).</text>
</comment>
<comment type="function">
    <text evidence="1">Component of the F(0) channel, it forms part of the peripheral stalk, linking F(1) to F(0). The b'-subunit is a diverged and duplicated form of b found in plants and photosynthetic bacteria (By similarity).</text>
</comment>
<comment type="subunit">
    <text evidence="1">F-type ATPases have 2 components, F(1) - the catalytic core - and F(0) - the membrane proton channel. F(1) has five subunits: alpha(3), beta(3), gamma(1), delta(1), epsilon(1). F(0) has three main subunits: a(1), b(2) and c(10-14). The alpha and beta chains form an alternating ring which encloses part of the gamma chain. F(1) is attached to F(0) by a central stalk formed by the gamma and epsilon chains, while a peripheral stalk is formed by the delta and b chains (By similarity).</text>
</comment>
<comment type="subcellular location">
    <subcellularLocation>
        <location evidence="1">Cell inner membrane</location>
        <topology evidence="1">Single-pass membrane protein</topology>
    </subcellularLocation>
</comment>
<comment type="similarity">
    <text evidence="3">Belongs to the ATPase B chain family.</text>
</comment>
<reference key="1">
    <citation type="submission" date="2008-02" db="EMBL/GenBank/DDBJ databases">
        <title>Complete sequence of chromosome of Methylobacterium sp. 4-46.</title>
        <authorList>
            <consortium name="US DOE Joint Genome Institute"/>
            <person name="Copeland A."/>
            <person name="Lucas S."/>
            <person name="Lapidus A."/>
            <person name="Glavina del Rio T."/>
            <person name="Dalin E."/>
            <person name="Tice H."/>
            <person name="Bruce D."/>
            <person name="Goodwin L."/>
            <person name="Pitluck S."/>
            <person name="Chertkov O."/>
            <person name="Brettin T."/>
            <person name="Detter J.C."/>
            <person name="Han C."/>
            <person name="Kuske C.R."/>
            <person name="Schmutz J."/>
            <person name="Larimer F."/>
            <person name="Land M."/>
            <person name="Hauser L."/>
            <person name="Kyrpides N."/>
            <person name="Ivanova N."/>
            <person name="Marx C.J."/>
            <person name="Richardson P."/>
        </authorList>
    </citation>
    <scope>NUCLEOTIDE SEQUENCE [LARGE SCALE GENOMIC DNA]</scope>
    <source>
        <strain>4-46</strain>
    </source>
</reference>
<name>ATPF2_METS4</name>